<reference key="1">
    <citation type="journal article" date="1984" name="J. Mol. Evol.">
        <title>Organization and nucleotide sequence of rainbow trout histone H2A and H3 genes.</title>
        <authorList>
            <person name="Connor W."/>
            <person name="States J.C."/>
            <person name="Mezquita J."/>
            <person name="Dixon G.H."/>
        </authorList>
    </citation>
    <scope>NUCLEOTIDE SEQUENCE [GENOMIC DNA]</scope>
</reference>
<reference key="2">
    <citation type="journal article" date="1972" name="Proc. Natl. Acad. Sci. U.S.A.">
        <title>Amino-terminal sequences and sites of in vivo acetylation of trout-testis histones 3 and IIb 2.</title>
        <authorList>
            <person name="Candido E.P.M."/>
            <person name="Dixon G.H."/>
        </authorList>
    </citation>
    <scope>PROTEIN SEQUENCE OF 2-26</scope>
    <scope>ACETYLATION AT LYS-10; LYS-15; LYS-19 AND LYS-24</scope>
</reference>
<accession>P84234</accession>
<accession>P02295</accession>
<accession>P02297</accession>
<accession>P16105</accession>
<accession>P17269</accession>
<accession>P17320</accession>
<dbReference type="EMBL" id="X01064">
    <property type="protein sequence ID" value="CAA25529.1"/>
    <property type="molecule type" value="Genomic_DNA"/>
</dbReference>
<dbReference type="PIR" id="B92959">
    <property type="entry name" value="HSTR3"/>
</dbReference>
<dbReference type="RefSeq" id="XP_021424196.1">
    <property type="nucleotide sequence ID" value="XM_021568521.2"/>
</dbReference>
<dbReference type="RefSeq" id="XP_036805814.1">
    <property type="nucleotide sequence ID" value="XM_036949919.1"/>
</dbReference>
<dbReference type="RefSeq" id="XP_036805829.1">
    <property type="nucleotide sequence ID" value="XM_036949934.1"/>
</dbReference>
<dbReference type="RefSeq" id="XP_036805830.1">
    <property type="nucleotide sequence ID" value="XM_036949935.1"/>
</dbReference>
<dbReference type="SMR" id="P84234"/>
<dbReference type="iPTMnet" id="P84234"/>
<dbReference type="GeneID" id="110493922"/>
<dbReference type="GeneID" id="118940435"/>
<dbReference type="GeneID" id="118940449"/>
<dbReference type="GeneID" id="118940450"/>
<dbReference type="OrthoDB" id="8868797at2759"/>
<dbReference type="Proteomes" id="UP000694395">
    <property type="component" value="Unplaced"/>
</dbReference>
<dbReference type="GO" id="GO:0000786">
    <property type="term" value="C:nucleosome"/>
    <property type="evidence" value="ECO:0007669"/>
    <property type="project" value="UniProtKB-KW"/>
</dbReference>
<dbReference type="GO" id="GO:0005634">
    <property type="term" value="C:nucleus"/>
    <property type="evidence" value="ECO:0007669"/>
    <property type="project" value="UniProtKB-SubCell"/>
</dbReference>
<dbReference type="GO" id="GO:0003677">
    <property type="term" value="F:DNA binding"/>
    <property type="evidence" value="ECO:0007669"/>
    <property type="project" value="UniProtKB-KW"/>
</dbReference>
<dbReference type="GO" id="GO:0046982">
    <property type="term" value="F:protein heterodimerization activity"/>
    <property type="evidence" value="ECO:0007669"/>
    <property type="project" value="InterPro"/>
</dbReference>
<dbReference type="GO" id="GO:0030527">
    <property type="term" value="F:structural constituent of chromatin"/>
    <property type="evidence" value="ECO:0007669"/>
    <property type="project" value="InterPro"/>
</dbReference>
<dbReference type="CDD" id="cd22911">
    <property type="entry name" value="HFD_H3"/>
    <property type="match status" value="1"/>
</dbReference>
<dbReference type="FunFam" id="1.10.20.10:FF:000078">
    <property type="entry name" value="Histone H3"/>
    <property type="match status" value="1"/>
</dbReference>
<dbReference type="FunFam" id="1.10.20.10:FF:000044">
    <property type="entry name" value="Histone H3.3"/>
    <property type="match status" value="1"/>
</dbReference>
<dbReference type="Gene3D" id="1.10.20.10">
    <property type="entry name" value="Histone, subunit A"/>
    <property type="match status" value="1"/>
</dbReference>
<dbReference type="InterPro" id="IPR009072">
    <property type="entry name" value="Histone-fold"/>
</dbReference>
<dbReference type="InterPro" id="IPR007125">
    <property type="entry name" value="Histone_H2A/H2B/H3"/>
</dbReference>
<dbReference type="InterPro" id="IPR000164">
    <property type="entry name" value="Histone_H3/CENP-A"/>
</dbReference>
<dbReference type="PANTHER" id="PTHR11426">
    <property type="entry name" value="HISTONE H3"/>
    <property type="match status" value="1"/>
</dbReference>
<dbReference type="Pfam" id="PF00125">
    <property type="entry name" value="Histone"/>
    <property type="match status" value="1"/>
</dbReference>
<dbReference type="PRINTS" id="PR00622">
    <property type="entry name" value="HISTONEH3"/>
</dbReference>
<dbReference type="SMART" id="SM00428">
    <property type="entry name" value="H3"/>
    <property type="match status" value="1"/>
</dbReference>
<dbReference type="SUPFAM" id="SSF47113">
    <property type="entry name" value="Histone-fold"/>
    <property type="match status" value="1"/>
</dbReference>
<dbReference type="PROSITE" id="PS00322">
    <property type="entry name" value="HISTONE_H3_1"/>
    <property type="match status" value="1"/>
</dbReference>
<dbReference type="PROSITE" id="PS00959">
    <property type="entry name" value="HISTONE_H3_2"/>
    <property type="match status" value="1"/>
</dbReference>
<comment type="function">
    <text>Core component of nucleosome. Nucleosomes wrap and compact DNA into chromatin, limiting DNA accessibility to the cellular machineries which require DNA as a template. Histones thereby play a central role in transcription regulation, DNA repair, DNA replication and chromosomal stability. DNA accessibility is regulated via a complex set of post-translational modifications of histones, also called histone code, and nucleosome remodeling.</text>
</comment>
<comment type="subunit">
    <text>The nucleosome is a histone octamer containing two molecules each of H2A, H2B, H3 and H4 assembled in one H3-H4 heterotetramer and two H2A-H2B heterodimers. The octamer wraps approximately 147 bp of DNA.</text>
</comment>
<comment type="subcellular location">
    <subcellularLocation>
        <location>Nucleus</location>
    </subcellularLocation>
    <subcellularLocation>
        <location>Chromosome</location>
    </subcellularLocation>
</comment>
<comment type="developmental stage">
    <text>Expressed during S phase, then expression strongly decreases as cell division slows down during the process of differentiation.</text>
</comment>
<comment type="PTM">
    <text evidence="7">Acetylation is generally linked to gene activation. Acetylation on Lys-19 (H3K18ac) and Lys-24 (H3K24ac) favors methylation at Arg-18 (H3R17me). Acetylation at Lys-123 (H3K122ac) by EP300/p300 plays a central role in chromatin structure: localizes at the surface of the histone octamer and stimulates transcription, possibly by promoting nucleosome instability (By similarity).</text>
</comment>
<comment type="PTM">
    <text evidence="7">Asymmetric dimethylation at Arg-18 (H3R17me2a) is linked to gene activation. Asymmetric dimethylation at Arg-3 (H3R2me2a) by prmt6 is linked to gene repression and is mutually exclusive with H3 Lys-5 methylation (H3K4me2 and H3K4me3). H3R2me2a is present at the 3' of genes regardless of their transcription state and is enriched on inactive promoters, while it is absent on active promoters (By similarity).</text>
</comment>
<comment type="PTM">
    <text evidence="7">Methylation at Lys-5 (H3K4me), Lys-37 (H3K36me) and Lys-80 (H3K79me) are linked to gene activation. Methylation at Lys-5 (H3K4me) facilitates subsequent acetylation of H3 and H4. Methylation at Lys-80 (H3K79me) is associated with DNA double-strand break (DSB) responses and is a specific target for tp53bp1. Methylation at Lys-10 (H3K9me) and Lys-28 (H3K27me) are linked to gene repression. Methylation at Lys-10 (H3K9me) is a specific target for HP1 proteins (cbx1, cbx3 and cbx5) and prevents subsequent phosphorylation at Ser-11 (H3S10ph) and acetylation of H3 and H4. Methylation at Lys-5 (H3K4me) and Lys-80 (H3K79me) require preliminary monoubiquitination of H2B at 'Lys-120' (By similarity).</text>
</comment>
<comment type="PTM">
    <text evidence="7">Phosphorylated at Thr-4 (H3T3ph) by VRK1 (By similarity). Phosphorylated at Thr-4 (H3T3ph) by HASPIN during prophase and dephosphorylated during anaphase. Phosphorylation at Ser-11 (H3S10ph) by aurkb is crucial for chromosome condensation and cell-cycle progression during mitosis and meiosis. In addition phosphorylation at Ser-11 (H3S10ph) by rps6ka4 and rps6ka5 is important during interphase because it enables the transcription of genes following external stimulation, like mitogens, stress, growth factors or UV irradiation and result in the activation of genes, such as c-fos and c-jun. Phosphorylation at Ser-11 (H3S10ph), which is linked to gene activation, prevents methylation at Lys-10 (H3K9me) but facilitates acetylation of H3 and H4. Phosphorylation at Ser-11 (H3S10ph) by aurkb mediates the dissociation of HP1 proteins (cbx1, cbx3 and cbx5) from heterochromatin. Phosphorylation at Ser-11 (H3S10ph) is also an essential regulatory mechanism for neoplastic cell transformation. Phosphorylated at Ser-29 (H3S28ph) by map3k20 isoform 1, rps6ka5 or aurkb during mitosis or upon ultraviolet B irradiation. Phosphorylation at Thr-7 (H3T6ph) by prkcb is a specific tag for epigenetic transcriptional activation that prevents demethylation of Lys-5 (H3K4me) by lsd1/kdm1a. At centromeres, specifically phosphorylated at Thr-12 (H3T11ph) from prophase to early anaphase, by DAPK3 and PKN1. Phosphorylation at Thr-12 (H3T11ph) by PKN1 or isoform M2 of PKM (PKM2) is a specific tag for epigenetic transcriptional activation that promotes demethylation of Lys-10 (H3K9me) by kdm4c/jmjd2c. Phosphorylation at Tyr-42 (H3Y41ph) by jak2 promotes exclusion of cbx5 (HP1 alpha) from chromatin (By similarity).</text>
</comment>
<comment type="PTM">
    <text evidence="7">Monoubiquitinated by rag1 in lymphoid cells, monoubiquitination is required for V(D)J recombination.</text>
</comment>
<comment type="PTM">
    <text evidence="7">Lysine deamination at Lys-5 (H3K4all) to form allysine only takes place on H3K4me3 and results in gene repression.</text>
</comment>
<comment type="PTM">
    <text evidence="3">Butyrylation of histones marks active promoters and competes with histone acetylation. It is present during late spermatogenesis.</text>
</comment>
<comment type="PTM">
    <text evidence="7">Succinylation at Lys-80 (H3K79succ) by KAT2A takes place with a maximum frequency around the transcription start sites of genes. It gives a specific tag for epigenetic transcription activation. Desuccinylation at Lys-123 (H3K122succ) by SIRT7 in response to DNA damage promotes chromatin condensation and double-strand breaks (DSBs) repair.</text>
</comment>
<comment type="PTM">
    <text evidence="2">Serine ADP-ribosylation by PARP1 or PARP2 constitutes the primary form of ADP-ribosylation of proteins in response to DNA damage. Serine ADP-ribosylation at Ser-11 (H3S10ADPr) promotes recruitment of CHD1L. H3S10ADPr is mutually exclusive with phosphorylation at Ser-11 (H3S10ph) and impairs acetylation at Lys-10 (H3K9ac).</text>
</comment>
<comment type="PTM">
    <text evidence="7">Serotonylated by TGM2 at Gln-6 (H3Q5ser) during serotonergic neuron differentiation (By similarity). H3Q5ser is associated with trimethylation of Lys-5 (H3K4me3) and enhances general transcription factor IID (TFIID) complex-binding to H3K4me3, thereby facilitating transcription (By similarity).</text>
</comment>
<comment type="PTM">
    <text evidence="6 7">Dopaminylated by TGM2 at Gln-6 (H3Q5dop) in ventral tegmental area (VTA) neurons (By similarity). H3Q5dop mediates neurotransmission-independent role of nuclear dopamine by regulating relapse-related transcriptional plasticity in the reward system (By similarity).</text>
</comment>
<comment type="PTM">
    <text evidence="7">Lactylated in macrophages by EP300/P300 by using lactoyl-CoA directly derived from endogenous or exogenous lactate, leading to stimulates gene transcription.</text>
</comment>
<comment type="similarity">
    <text evidence="10">Belongs to the histone H3 family.</text>
</comment>
<protein>
    <recommendedName>
        <fullName>Histone H3.2</fullName>
    </recommendedName>
</protein>
<name>H32_ONCMY</name>
<evidence type="ECO:0000250" key="1"/>
<evidence type="ECO:0000250" key="2">
    <source>
        <dbReference type="UniProtKB" id="P68431"/>
    </source>
</evidence>
<evidence type="ECO:0000250" key="3">
    <source>
        <dbReference type="UniProtKB" id="P68433"/>
    </source>
</evidence>
<evidence type="ECO:0000250" key="4">
    <source>
        <dbReference type="UniProtKB" id="P84228"/>
    </source>
</evidence>
<evidence type="ECO:0000250" key="5">
    <source>
        <dbReference type="UniProtKB" id="P84243"/>
    </source>
</evidence>
<evidence type="ECO:0000250" key="6">
    <source>
        <dbReference type="UniProtKB" id="P84245"/>
    </source>
</evidence>
<evidence type="ECO:0000250" key="7">
    <source>
        <dbReference type="UniProtKB" id="Q71DI3"/>
    </source>
</evidence>
<evidence type="ECO:0000256" key="8">
    <source>
        <dbReference type="SAM" id="MobiDB-lite"/>
    </source>
</evidence>
<evidence type="ECO:0000269" key="9">
    <source>
    </source>
</evidence>
<evidence type="ECO:0000305" key="10"/>
<proteinExistence type="evidence at protein level"/>
<keyword id="KW-0007">Acetylation</keyword>
<keyword id="KW-0013">ADP-ribosylation</keyword>
<keyword id="KW-0158">Chromosome</keyword>
<keyword id="KW-0164">Citrullination</keyword>
<keyword id="KW-0903">Direct protein sequencing</keyword>
<keyword id="KW-0238">DNA-binding</keyword>
<keyword id="KW-0379">Hydroxylation</keyword>
<keyword id="KW-0449">Lipoprotein</keyword>
<keyword id="KW-0488">Methylation</keyword>
<keyword id="KW-0544">Nucleosome core</keyword>
<keyword id="KW-0539">Nucleus</keyword>
<keyword id="KW-0564">Palmitate</keyword>
<keyword id="KW-0597">Phosphoprotein</keyword>
<keyword id="KW-0832">Ubl conjugation</keyword>
<sequence>MARTKQTARKSTGGKAPRKQLATKAARKSAPATGGVKKPHRYRPGTVALREIRRYQKSTELLIRKLPFQRLVREIAQDFKTDLRFQSSAVMALQEASEAYLVGLFEDTNLCAIHAKRVTIMPKDIQLARRIRGERA</sequence>
<feature type="initiator methionine" description="Removed" evidence="9">
    <location>
        <position position="1"/>
    </location>
</feature>
<feature type="chain" id="PRO_0000221263" description="Histone H3.2">
    <location>
        <begin position="2"/>
        <end position="136"/>
    </location>
</feature>
<feature type="region of interest" description="Disordered" evidence="8">
    <location>
        <begin position="1"/>
        <end position="43"/>
    </location>
</feature>
<feature type="modified residue" description="Asymmetric dimethylarginine; by PRMT6; alternate" evidence="7">
    <location>
        <position position="3"/>
    </location>
</feature>
<feature type="modified residue" description="Citrulline; alternate" evidence="7">
    <location>
        <position position="3"/>
    </location>
</feature>
<feature type="modified residue" description="Phosphothreonine; by HASPIN and VRK1" evidence="7">
    <location>
        <position position="4"/>
    </location>
</feature>
<feature type="modified residue" description="Allysine; alternate" evidence="7">
    <location>
        <position position="5"/>
    </location>
</feature>
<feature type="modified residue" description="N6,N6,N6-trimethyllysine; alternate" evidence="7">
    <location>
        <position position="5"/>
    </location>
</feature>
<feature type="modified residue" description="N6,N6-dimethyllysine; alternate" evidence="7">
    <location>
        <position position="5"/>
    </location>
</feature>
<feature type="modified residue" description="N6-(2-hydroxyisobutyryl)lysine; alternate" evidence="2">
    <location>
        <position position="5"/>
    </location>
</feature>
<feature type="modified residue" description="N6-acetyllysine; alternate" evidence="7">
    <location>
        <position position="5"/>
    </location>
</feature>
<feature type="modified residue" description="N6-crotonyllysine; alternate" evidence="7">
    <location>
        <position position="5"/>
    </location>
</feature>
<feature type="modified residue" description="N6-methyllysine; alternate" evidence="7">
    <location>
        <position position="5"/>
    </location>
</feature>
<feature type="modified residue" description="5-glutamyl dopamine; alternate" evidence="7">
    <location>
        <position position="6"/>
    </location>
</feature>
<feature type="modified residue" description="5-glutamyl serotonin; alternate" evidence="7">
    <location>
        <position position="6"/>
    </location>
</feature>
<feature type="modified residue" description="Phosphothreonine; by PKC" evidence="7">
    <location>
        <position position="7"/>
    </location>
</feature>
<feature type="modified residue" description="Citrulline; alternate" evidence="7">
    <location>
        <position position="9"/>
    </location>
</feature>
<feature type="modified residue" description="Symmetric dimethylarginine; by PRMT5; alternate" evidence="1">
    <location>
        <position position="9"/>
    </location>
</feature>
<feature type="modified residue" description="N6,N6,N6-trimethyllysine; alternate" evidence="7">
    <location>
        <position position="10"/>
    </location>
</feature>
<feature type="modified residue" description="N6,N6-dimethyllysine; alternate" evidence="7">
    <location>
        <position position="10"/>
    </location>
</feature>
<feature type="modified residue" description="N6-(2-hydroxyisobutyryl)lysine; alternate" evidence="2">
    <location>
        <position position="10"/>
    </location>
</feature>
<feature type="modified residue" description="N6-acetyllysine; alternate" evidence="9">
    <location>
        <position position="10"/>
    </location>
</feature>
<feature type="modified residue" description="N6-crotonyllysine; alternate" evidence="7">
    <location>
        <position position="10"/>
    </location>
</feature>
<feature type="modified residue" description="N6-lactoyllysine; alternate" evidence="7">
    <location>
        <position position="10"/>
    </location>
</feature>
<feature type="modified residue" description="N6-methyllysine; alternate" evidence="7">
    <location>
        <position position="10"/>
    </location>
</feature>
<feature type="modified residue" description="ADP-ribosylserine; alternate" evidence="2">
    <location>
        <position position="11"/>
    </location>
</feature>
<feature type="modified residue" description="Phosphoserine; alternate; by AURKB, AURKC, RPS6KA3, RPS6KA4 and RPS6KA5" evidence="7">
    <location>
        <position position="11"/>
    </location>
</feature>
<feature type="modified residue" description="Phosphothreonine; by PKC" evidence="7">
    <location>
        <position position="12"/>
    </location>
</feature>
<feature type="modified residue" description="N6-(2-hydroxyisobutyryl)lysine; alternate" evidence="2">
    <location>
        <position position="15"/>
    </location>
</feature>
<feature type="modified residue" description="N6-acetyllysine" evidence="9">
    <location>
        <position position="15"/>
    </location>
</feature>
<feature type="modified residue" description="N6-glutaryllysine; alternate" evidence="7">
    <location>
        <position position="15"/>
    </location>
</feature>
<feature type="modified residue" description="N6-lactoyllysine; alternate" evidence="4">
    <location>
        <position position="15"/>
    </location>
</feature>
<feature type="modified residue" description="Asymmetric dimethylarginine; by CARM1; alternate" evidence="7">
    <location>
        <position position="18"/>
    </location>
</feature>
<feature type="modified residue" description="Citrulline; alternate" evidence="7">
    <location>
        <position position="18"/>
    </location>
</feature>
<feature type="modified residue" description="N6-(2-hydroxyisobutyryl)lysine; alternate" evidence="2">
    <location>
        <position position="19"/>
    </location>
</feature>
<feature type="modified residue" description="N6-acetyllysine; alternate" evidence="9">
    <location>
        <position position="19"/>
    </location>
</feature>
<feature type="modified residue" description="N6-butyryllysine; alternate" evidence="3">
    <location>
        <position position="19"/>
    </location>
</feature>
<feature type="modified residue" description="N6-crotonyllysine; alternate" evidence="7">
    <location>
        <position position="19"/>
    </location>
</feature>
<feature type="modified residue" description="N6-glutaryllysine; alternate" evidence="7">
    <location>
        <position position="19"/>
    </location>
</feature>
<feature type="modified residue" description="N6-lactoyllysine; alternate" evidence="7">
    <location>
        <position position="19"/>
    </location>
</feature>
<feature type="modified residue" description="N6-methyllysine; alternate" evidence="7">
    <location>
        <position position="19"/>
    </location>
</feature>
<feature type="modified residue" description="N6-(2-hydroxyisobutyryl)lysine; alternate" evidence="2">
    <location>
        <position position="24"/>
    </location>
</feature>
<feature type="modified residue" description="N6-acetyllysine; alternate" evidence="9">
    <location>
        <position position="24"/>
    </location>
</feature>
<feature type="modified residue" description="N6-butyryllysine; alternate" evidence="3">
    <location>
        <position position="24"/>
    </location>
</feature>
<feature type="modified residue" description="N6-crotonyllysine; alternate" evidence="7">
    <location>
        <position position="24"/>
    </location>
</feature>
<feature type="modified residue" description="N6-glutaryllysine; alternate" evidence="7">
    <location>
        <position position="24"/>
    </location>
</feature>
<feature type="modified residue" description="N6-lactoyllysine; alternate" evidence="7">
    <location>
        <position position="24"/>
    </location>
</feature>
<feature type="modified residue" description="N6-methyllysine; alternate" evidence="7">
    <location>
        <position position="24"/>
    </location>
</feature>
<feature type="modified residue" description="Citrulline" evidence="7">
    <location>
        <position position="27"/>
    </location>
</feature>
<feature type="modified residue" description="N6,N6,N6-trimethyllysine; alternate" evidence="7">
    <location>
        <position position="28"/>
    </location>
</feature>
<feature type="modified residue" description="N6,N6-dimethyllysine; alternate" evidence="7">
    <location>
        <position position="28"/>
    </location>
</feature>
<feature type="modified residue" description="N6-(2-hydroxyisobutyryl)lysine; alternate" evidence="2">
    <location>
        <position position="28"/>
    </location>
</feature>
<feature type="modified residue" description="N6-acetyllysine; alternate" evidence="7">
    <location>
        <position position="28"/>
    </location>
</feature>
<feature type="modified residue" description="N6-crotonyllysine; alternate" evidence="7">
    <location>
        <position position="28"/>
    </location>
</feature>
<feature type="modified residue" description="N6-glutaryllysine; alternate" evidence="7">
    <location>
        <position position="28"/>
    </location>
</feature>
<feature type="modified residue" description="N6-lactoyllysine; alternate" evidence="7">
    <location>
        <position position="28"/>
    </location>
</feature>
<feature type="modified residue" description="N6-methyllysine; alternate" evidence="7">
    <location>
        <position position="28"/>
    </location>
</feature>
<feature type="modified residue" description="ADP-ribosylserine; alternate" evidence="2">
    <location>
        <position position="29"/>
    </location>
</feature>
<feature type="modified residue" description="Phosphoserine; alternate; by AURKB, AURKC and RPS6KA5" evidence="7">
    <location>
        <position position="29"/>
    </location>
</feature>
<feature type="modified residue" description="N6,N6,N6-trimethyllysine; alternate" evidence="7">
    <location>
        <position position="37"/>
    </location>
</feature>
<feature type="modified residue" description="N6,N6-dimethyllysine; alternate" evidence="7">
    <location>
        <position position="37"/>
    </location>
</feature>
<feature type="modified residue" description="N6-(2-hydroxyisobutyryl)lysine; alternate" evidence="2">
    <location>
        <position position="37"/>
    </location>
</feature>
<feature type="modified residue" description="N6-acetyllysine; alternate" evidence="7">
    <location>
        <position position="37"/>
    </location>
</feature>
<feature type="modified residue" description="N6-methyllysine; alternate" evidence="7">
    <location>
        <position position="37"/>
    </location>
</feature>
<feature type="modified residue" description="N6-methyllysine" evidence="2">
    <location>
        <position position="38"/>
    </location>
</feature>
<feature type="modified residue" description="Phosphotyrosine" evidence="7">
    <location>
        <position position="42"/>
    </location>
</feature>
<feature type="modified residue" description="N6,N6,N6-trimethyllysine; alternate" evidence="7">
    <location>
        <position position="57"/>
    </location>
</feature>
<feature type="modified residue" description="N6-(2-hydroxyisobutyryl)lysine; alternate" evidence="2">
    <location>
        <position position="57"/>
    </location>
</feature>
<feature type="modified residue" description="N6-acetyllysine; alternate" evidence="7">
    <location>
        <position position="57"/>
    </location>
</feature>
<feature type="modified residue" description="N6-crotonyllysine; alternate" evidence="7">
    <location>
        <position position="57"/>
    </location>
</feature>
<feature type="modified residue" description="N6-glutaryllysine; alternate" evidence="7">
    <location>
        <position position="57"/>
    </location>
</feature>
<feature type="modified residue" description="N6-lactoyllysine; alternate" evidence="4">
    <location>
        <position position="57"/>
    </location>
</feature>
<feature type="modified residue" description="N6-methyllysine; by EHMT2; alternate" evidence="7">
    <location>
        <position position="57"/>
    </location>
</feature>
<feature type="modified residue" description="N6-succinyllysine; alternate" evidence="4">
    <location>
        <position position="57"/>
    </location>
</feature>
<feature type="modified residue" description="Phosphoserine" evidence="7">
    <location>
        <position position="58"/>
    </location>
</feature>
<feature type="modified residue" description="N6-(2-hydroxyisobutyryl)lysine; alternate" evidence="2">
    <location>
        <position position="65"/>
    </location>
</feature>
<feature type="modified residue" description="N6-methyllysine; alternate" evidence="7">
    <location>
        <position position="65"/>
    </location>
</feature>
<feature type="modified residue" description="N6,N6,N6-trimethyllysine; alternate" evidence="4">
    <location>
        <position position="80"/>
    </location>
</feature>
<feature type="modified residue" description="N6,N6-dimethyllysine; alternate" evidence="7">
    <location>
        <position position="80"/>
    </location>
</feature>
<feature type="modified residue" description="N6-(2-hydroxyisobutyryl)lysine; alternate" evidence="2">
    <location>
        <position position="80"/>
    </location>
</feature>
<feature type="modified residue" description="N6-acetyllysine; alternate" evidence="7">
    <location>
        <position position="80"/>
    </location>
</feature>
<feature type="modified residue" description="N6-glutaryllysine; alternate" evidence="7">
    <location>
        <position position="80"/>
    </location>
</feature>
<feature type="modified residue" description="N6-lactoyllysine; alternate" evidence="7">
    <location>
        <position position="80"/>
    </location>
</feature>
<feature type="modified residue" description="N6-methyllysine; alternate" evidence="7">
    <location>
        <position position="80"/>
    </location>
</feature>
<feature type="modified residue" description="N6-succinyllysine; alternate" evidence="4">
    <location>
        <position position="80"/>
    </location>
</feature>
<feature type="modified residue" description="Phosphothreonine" evidence="7">
    <location>
        <position position="81"/>
    </location>
</feature>
<feature type="modified residue" description="Phosphoserine" evidence="5">
    <location>
        <position position="87"/>
    </location>
</feature>
<feature type="modified residue" description="Phosphothreonine" evidence="7">
    <location>
        <position position="108"/>
    </location>
</feature>
<feature type="modified residue" description="N6-acetyllysine; alternate" evidence="7">
    <location>
        <position position="116"/>
    </location>
</feature>
<feature type="modified residue" description="N6-glutaryllysine; alternate" evidence="7">
    <location>
        <position position="116"/>
    </location>
</feature>
<feature type="modified residue" description="N6-(2-hydroxyisobutyryl)lysine; alternate" evidence="2">
    <location>
        <position position="123"/>
    </location>
</feature>
<feature type="modified residue" description="N6-acetyllysine; alternate" evidence="7">
    <location>
        <position position="123"/>
    </location>
</feature>
<feature type="modified residue" description="N6-glutaryllysine; alternate" evidence="7">
    <location>
        <position position="123"/>
    </location>
</feature>
<feature type="modified residue" description="N6-methyllysine; alternate" evidence="7">
    <location>
        <position position="123"/>
    </location>
</feature>
<feature type="modified residue" description="N6-succinyllysine; alternate" evidence="7">
    <location>
        <position position="123"/>
    </location>
</feature>
<feature type="lipid moiety-binding region" description="S-palmitoyl cysteine" evidence="7">
    <location>
        <position position="111"/>
    </location>
</feature>
<organism>
    <name type="scientific">Oncorhynchus mykiss</name>
    <name type="common">Rainbow trout</name>
    <name type="synonym">Salmo gairdneri</name>
    <dbReference type="NCBI Taxonomy" id="8022"/>
    <lineage>
        <taxon>Eukaryota</taxon>
        <taxon>Metazoa</taxon>
        <taxon>Chordata</taxon>
        <taxon>Craniata</taxon>
        <taxon>Vertebrata</taxon>
        <taxon>Euteleostomi</taxon>
        <taxon>Actinopterygii</taxon>
        <taxon>Neopterygii</taxon>
        <taxon>Teleostei</taxon>
        <taxon>Protacanthopterygii</taxon>
        <taxon>Salmoniformes</taxon>
        <taxon>Salmonidae</taxon>
        <taxon>Salmoninae</taxon>
        <taxon>Oncorhynchus</taxon>
    </lineage>
</organism>